<evidence type="ECO:0000255" key="1">
    <source>
        <dbReference type="HAMAP-Rule" id="MF_00015"/>
    </source>
</evidence>
<name>LEXA_STAHJ</name>
<dbReference type="EC" id="3.4.21.88" evidence="1"/>
<dbReference type="EMBL" id="AP006716">
    <property type="protein sequence ID" value="BAE04877.1"/>
    <property type="molecule type" value="Genomic_DNA"/>
</dbReference>
<dbReference type="RefSeq" id="WP_011275859.1">
    <property type="nucleotide sequence ID" value="NC_007168.1"/>
</dbReference>
<dbReference type="SMR" id="Q4L648"/>
<dbReference type="MEROPS" id="S24.001"/>
<dbReference type="GeneID" id="93780955"/>
<dbReference type="KEGG" id="sha:SH1568"/>
<dbReference type="eggNOG" id="COG1974">
    <property type="taxonomic scope" value="Bacteria"/>
</dbReference>
<dbReference type="HOGENOM" id="CLU_066192_45_1_9"/>
<dbReference type="OrthoDB" id="9802364at2"/>
<dbReference type="Proteomes" id="UP000000543">
    <property type="component" value="Chromosome"/>
</dbReference>
<dbReference type="GO" id="GO:0003677">
    <property type="term" value="F:DNA binding"/>
    <property type="evidence" value="ECO:0007669"/>
    <property type="project" value="UniProtKB-UniRule"/>
</dbReference>
<dbReference type="GO" id="GO:0004252">
    <property type="term" value="F:serine-type endopeptidase activity"/>
    <property type="evidence" value="ECO:0007669"/>
    <property type="project" value="UniProtKB-UniRule"/>
</dbReference>
<dbReference type="GO" id="GO:0006281">
    <property type="term" value="P:DNA repair"/>
    <property type="evidence" value="ECO:0007669"/>
    <property type="project" value="UniProtKB-UniRule"/>
</dbReference>
<dbReference type="GO" id="GO:0006260">
    <property type="term" value="P:DNA replication"/>
    <property type="evidence" value="ECO:0007669"/>
    <property type="project" value="UniProtKB-UniRule"/>
</dbReference>
<dbReference type="GO" id="GO:0045892">
    <property type="term" value="P:negative regulation of DNA-templated transcription"/>
    <property type="evidence" value="ECO:0007669"/>
    <property type="project" value="UniProtKB-UniRule"/>
</dbReference>
<dbReference type="GO" id="GO:0006508">
    <property type="term" value="P:proteolysis"/>
    <property type="evidence" value="ECO:0007669"/>
    <property type="project" value="InterPro"/>
</dbReference>
<dbReference type="GO" id="GO:0009432">
    <property type="term" value="P:SOS response"/>
    <property type="evidence" value="ECO:0007669"/>
    <property type="project" value="UniProtKB-UniRule"/>
</dbReference>
<dbReference type="CDD" id="cd00090">
    <property type="entry name" value="HTH_ARSR"/>
    <property type="match status" value="1"/>
</dbReference>
<dbReference type="CDD" id="cd06529">
    <property type="entry name" value="S24_LexA-like"/>
    <property type="match status" value="1"/>
</dbReference>
<dbReference type="FunFam" id="1.10.10.10:FF:000009">
    <property type="entry name" value="LexA repressor"/>
    <property type="match status" value="1"/>
</dbReference>
<dbReference type="FunFam" id="2.10.109.10:FF:000001">
    <property type="entry name" value="LexA repressor"/>
    <property type="match status" value="1"/>
</dbReference>
<dbReference type="Gene3D" id="2.10.109.10">
    <property type="entry name" value="Umud Fragment, subunit A"/>
    <property type="match status" value="1"/>
</dbReference>
<dbReference type="Gene3D" id="1.10.10.10">
    <property type="entry name" value="Winged helix-like DNA-binding domain superfamily/Winged helix DNA-binding domain"/>
    <property type="match status" value="1"/>
</dbReference>
<dbReference type="HAMAP" id="MF_00015">
    <property type="entry name" value="LexA"/>
    <property type="match status" value="1"/>
</dbReference>
<dbReference type="InterPro" id="IPR011991">
    <property type="entry name" value="ArsR-like_HTH"/>
</dbReference>
<dbReference type="InterPro" id="IPR006200">
    <property type="entry name" value="LexA"/>
</dbReference>
<dbReference type="InterPro" id="IPR039418">
    <property type="entry name" value="LexA-like"/>
</dbReference>
<dbReference type="InterPro" id="IPR036286">
    <property type="entry name" value="LexA/Signal_pep-like_sf"/>
</dbReference>
<dbReference type="InterPro" id="IPR006199">
    <property type="entry name" value="LexA_DNA-bd_dom"/>
</dbReference>
<dbReference type="InterPro" id="IPR050077">
    <property type="entry name" value="LexA_repressor"/>
</dbReference>
<dbReference type="InterPro" id="IPR006197">
    <property type="entry name" value="Peptidase_S24_LexA"/>
</dbReference>
<dbReference type="InterPro" id="IPR015927">
    <property type="entry name" value="Peptidase_S24_S26A/B/C"/>
</dbReference>
<dbReference type="InterPro" id="IPR036388">
    <property type="entry name" value="WH-like_DNA-bd_sf"/>
</dbReference>
<dbReference type="InterPro" id="IPR036390">
    <property type="entry name" value="WH_DNA-bd_sf"/>
</dbReference>
<dbReference type="NCBIfam" id="TIGR00498">
    <property type="entry name" value="lexA"/>
    <property type="match status" value="1"/>
</dbReference>
<dbReference type="PANTHER" id="PTHR33516">
    <property type="entry name" value="LEXA REPRESSOR"/>
    <property type="match status" value="1"/>
</dbReference>
<dbReference type="PANTHER" id="PTHR33516:SF2">
    <property type="entry name" value="LEXA REPRESSOR-RELATED"/>
    <property type="match status" value="1"/>
</dbReference>
<dbReference type="Pfam" id="PF01726">
    <property type="entry name" value="LexA_DNA_bind"/>
    <property type="match status" value="1"/>
</dbReference>
<dbReference type="Pfam" id="PF00717">
    <property type="entry name" value="Peptidase_S24"/>
    <property type="match status" value="1"/>
</dbReference>
<dbReference type="PRINTS" id="PR00726">
    <property type="entry name" value="LEXASERPTASE"/>
</dbReference>
<dbReference type="SUPFAM" id="SSF51306">
    <property type="entry name" value="LexA/Signal peptidase"/>
    <property type="match status" value="1"/>
</dbReference>
<dbReference type="SUPFAM" id="SSF46785">
    <property type="entry name" value="Winged helix' DNA-binding domain"/>
    <property type="match status" value="1"/>
</dbReference>
<sequence>MRELTKRQSEIYDYIKHVVQTKGYPPSVREIGEAVGLASSSTVHGHLSRLEEKGYIKRDPTKPRAIEIVSEQTNDAVNMEETIYVPVIGKVTAGIPITAVENIEEYFPLPEHLTSTHNSDIFILNVVGESMIEAGILDGDKVIVRSQTIAENGDIIVAMTEDDEATVKRFYKEKTRYRLQPENSTMSPIYLDNVTVIGKVIGLYREL</sequence>
<gene>
    <name evidence="1" type="primary">lexA</name>
    <name type="ordered locus">SH1568</name>
</gene>
<reference key="1">
    <citation type="journal article" date="2005" name="J. Bacteriol.">
        <title>Whole-genome sequencing of Staphylococcus haemolyticus uncovers the extreme plasticity of its genome and the evolution of human-colonizing staphylococcal species.</title>
        <authorList>
            <person name="Takeuchi F."/>
            <person name="Watanabe S."/>
            <person name="Baba T."/>
            <person name="Yuzawa H."/>
            <person name="Ito T."/>
            <person name="Morimoto Y."/>
            <person name="Kuroda M."/>
            <person name="Cui L."/>
            <person name="Takahashi M."/>
            <person name="Ankai A."/>
            <person name="Baba S."/>
            <person name="Fukui S."/>
            <person name="Lee J.C."/>
            <person name="Hiramatsu K."/>
        </authorList>
    </citation>
    <scope>NUCLEOTIDE SEQUENCE [LARGE SCALE GENOMIC DNA]</scope>
    <source>
        <strain>JCSC1435</strain>
    </source>
</reference>
<proteinExistence type="inferred from homology"/>
<keyword id="KW-0068">Autocatalytic cleavage</keyword>
<keyword id="KW-0227">DNA damage</keyword>
<keyword id="KW-0234">DNA repair</keyword>
<keyword id="KW-0235">DNA replication</keyword>
<keyword id="KW-0238">DNA-binding</keyword>
<keyword id="KW-0378">Hydrolase</keyword>
<keyword id="KW-0678">Repressor</keyword>
<keyword id="KW-0742">SOS response</keyword>
<keyword id="KW-0804">Transcription</keyword>
<keyword id="KW-0805">Transcription regulation</keyword>
<comment type="function">
    <text evidence="1">Represses a number of genes involved in the response to DNA damage (SOS response), including recA and lexA. In the presence of single-stranded DNA, RecA interacts with LexA causing an autocatalytic cleavage which disrupts the DNA-binding part of LexA, leading to derepression of the SOS regulon and eventually DNA repair.</text>
</comment>
<comment type="catalytic activity">
    <reaction evidence="1">
        <text>Hydrolysis of Ala-|-Gly bond in repressor LexA.</text>
        <dbReference type="EC" id="3.4.21.88"/>
    </reaction>
</comment>
<comment type="subunit">
    <text evidence="1">Homodimer.</text>
</comment>
<comment type="similarity">
    <text evidence="1">Belongs to the peptidase S24 family.</text>
</comment>
<organism>
    <name type="scientific">Staphylococcus haemolyticus (strain JCSC1435)</name>
    <dbReference type="NCBI Taxonomy" id="279808"/>
    <lineage>
        <taxon>Bacteria</taxon>
        <taxon>Bacillati</taxon>
        <taxon>Bacillota</taxon>
        <taxon>Bacilli</taxon>
        <taxon>Bacillales</taxon>
        <taxon>Staphylococcaceae</taxon>
        <taxon>Staphylococcus</taxon>
    </lineage>
</organism>
<accession>Q4L648</accession>
<protein>
    <recommendedName>
        <fullName evidence="1">LexA repressor</fullName>
        <ecNumber evidence="1">3.4.21.88</ecNumber>
    </recommendedName>
</protein>
<feature type="chain" id="PRO_0000322765" description="LexA repressor">
    <location>
        <begin position="1"/>
        <end position="207"/>
    </location>
</feature>
<feature type="DNA-binding region" description="H-T-H motif" evidence="1">
    <location>
        <begin position="28"/>
        <end position="48"/>
    </location>
</feature>
<feature type="active site" description="For autocatalytic cleavage activity" evidence="1">
    <location>
        <position position="130"/>
    </location>
</feature>
<feature type="active site" description="For autocatalytic cleavage activity" evidence="1">
    <location>
        <position position="168"/>
    </location>
</feature>
<feature type="site" description="Cleavage; by autolysis" evidence="1">
    <location>
        <begin position="93"/>
        <end position="94"/>
    </location>
</feature>